<evidence type="ECO:0000255" key="1">
    <source>
        <dbReference type="HAMAP-Rule" id="MF_01813"/>
    </source>
</evidence>
<proteinExistence type="inferred from homology"/>
<accession>B5EZU8</accession>
<protein>
    <recommendedName>
        <fullName evidence="1">Ubiquinone/menaquinone biosynthesis C-methyltransferase UbiE</fullName>
        <ecNumber evidence="1">2.1.1.163</ecNumber>
        <ecNumber evidence="1">2.1.1.201</ecNumber>
    </recommendedName>
    <alternativeName>
        <fullName evidence="1">2-methoxy-6-polyprenyl-1,4-benzoquinol methylase</fullName>
    </alternativeName>
    <alternativeName>
        <fullName evidence="1">Demethylmenaquinone methyltransferase</fullName>
    </alternativeName>
</protein>
<reference key="1">
    <citation type="journal article" date="2011" name="J. Bacteriol.">
        <title>Comparative genomics of 28 Salmonella enterica isolates: evidence for CRISPR-mediated adaptive sublineage evolution.</title>
        <authorList>
            <person name="Fricke W.F."/>
            <person name="Mammel M.K."/>
            <person name="McDermott P.F."/>
            <person name="Tartera C."/>
            <person name="White D.G."/>
            <person name="Leclerc J.E."/>
            <person name="Ravel J."/>
            <person name="Cebula T.A."/>
        </authorList>
    </citation>
    <scope>NUCLEOTIDE SEQUENCE [LARGE SCALE GENOMIC DNA]</scope>
    <source>
        <strain>SL483</strain>
    </source>
</reference>
<dbReference type="EC" id="2.1.1.163" evidence="1"/>
<dbReference type="EC" id="2.1.1.201" evidence="1"/>
<dbReference type="EMBL" id="CP001138">
    <property type="protein sequence ID" value="ACH49862.1"/>
    <property type="molecule type" value="Genomic_DNA"/>
</dbReference>
<dbReference type="RefSeq" id="WP_000229009.1">
    <property type="nucleotide sequence ID" value="NC_011149.1"/>
</dbReference>
<dbReference type="SMR" id="B5EZU8"/>
<dbReference type="KEGG" id="sea:SeAg_B4201"/>
<dbReference type="HOGENOM" id="CLU_037990_0_0_6"/>
<dbReference type="UniPathway" id="UPA00079">
    <property type="reaction ID" value="UER00169"/>
</dbReference>
<dbReference type="UniPathway" id="UPA00232"/>
<dbReference type="Proteomes" id="UP000008819">
    <property type="component" value="Chromosome"/>
</dbReference>
<dbReference type="GO" id="GO:0008425">
    <property type="term" value="F:2-methoxy-6-polyprenyl-1,4-benzoquinol methyltransferase activity"/>
    <property type="evidence" value="ECO:0007669"/>
    <property type="project" value="UniProtKB-UniRule"/>
</dbReference>
<dbReference type="GO" id="GO:0043770">
    <property type="term" value="F:demethylmenaquinone methyltransferase activity"/>
    <property type="evidence" value="ECO:0007669"/>
    <property type="project" value="UniProtKB-UniRule"/>
</dbReference>
<dbReference type="GO" id="GO:0009060">
    <property type="term" value="P:aerobic respiration"/>
    <property type="evidence" value="ECO:0007669"/>
    <property type="project" value="UniProtKB-UniRule"/>
</dbReference>
<dbReference type="GO" id="GO:0009234">
    <property type="term" value="P:menaquinone biosynthetic process"/>
    <property type="evidence" value="ECO:0007669"/>
    <property type="project" value="UniProtKB-UniRule"/>
</dbReference>
<dbReference type="GO" id="GO:0032259">
    <property type="term" value="P:methylation"/>
    <property type="evidence" value="ECO:0007669"/>
    <property type="project" value="UniProtKB-KW"/>
</dbReference>
<dbReference type="CDD" id="cd02440">
    <property type="entry name" value="AdoMet_MTases"/>
    <property type="match status" value="1"/>
</dbReference>
<dbReference type="FunFam" id="3.40.50.150:FF:000014">
    <property type="entry name" value="Ubiquinone/menaquinone biosynthesis C-methyltransferase UbiE"/>
    <property type="match status" value="1"/>
</dbReference>
<dbReference type="Gene3D" id="3.40.50.150">
    <property type="entry name" value="Vaccinia Virus protein VP39"/>
    <property type="match status" value="1"/>
</dbReference>
<dbReference type="HAMAP" id="MF_01813">
    <property type="entry name" value="MenG_UbiE_methyltr"/>
    <property type="match status" value="1"/>
</dbReference>
<dbReference type="InterPro" id="IPR029063">
    <property type="entry name" value="SAM-dependent_MTases_sf"/>
</dbReference>
<dbReference type="InterPro" id="IPR004033">
    <property type="entry name" value="UbiE/COQ5_MeTrFase"/>
</dbReference>
<dbReference type="InterPro" id="IPR023576">
    <property type="entry name" value="UbiE/COQ5_MeTrFase_CS"/>
</dbReference>
<dbReference type="NCBIfam" id="TIGR01934">
    <property type="entry name" value="MenG_MenH_UbiE"/>
    <property type="match status" value="1"/>
</dbReference>
<dbReference type="NCBIfam" id="NF001240">
    <property type="entry name" value="PRK00216.1-1"/>
    <property type="match status" value="1"/>
</dbReference>
<dbReference type="NCBIfam" id="NF001242">
    <property type="entry name" value="PRK00216.1-3"/>
    <property type="match status" value="1"/>
</dbReference>
<dbReference type="NCBIfam" id="NF001244">
    <property type="entry name" value="PRK00216.1-5"/>
    <property type="match status" value="1"/>
</dbReference>
<dbReference type="PANTHER" id="PTHR43591:SF24">
    <property type="entry name" value="2-METHOXY-6-POLYPRENYL-1,4-BENZOQUINOL METHYLASE, MITOCHONDRIAL"/>
    <property type="match status" value="1"/>
</dbReference>
<dbReference type="PANTHER" id="PTHR43591">
    <property type="entry name" value="METHYLTRANSFERASE"/>
    <property type="match status" value="1"/>
</dbReference>
<dbReference type="Pfam" id="PF01209">
    <property type="entry name" value="Ubie_methyltran"/>
    <property type="match status" value="1"/>
</dbReference>
<dbReference type="SUPFAM" id="SSF53335">
    <property type="entry name" value="S-adenosyl-L-methionine-dependent methyltransferases"/>
    <property type="match status" value="1"/>
</dbReference>
<dbReference type="PROSITE" id="PS51608">
    <property type="entry name" value="SAM_MT_UBIE"/>
    <property type="match status" value="1"/>
</dbReference>
<dbReference type="PROSITE" id="PS01183">
    <property type="entry name" value="UBIE_1"/>
    <property type="match status" value="1"/>
</dbReference>
<dbReference type="PROSITE" id="PS01184">
    <property type="entry name" value="UBIE_2"/>
    <property type="match status" value="1"/>
</dbReference>
<feature type="chain" id="PRO_1000187802" description="Ubiquinone/menaquinone biosynthesis C-methyltransferase UbiE">
    <location>
        <begin position="1"/>
        <end position="251"/>
    </location>
</feature>
<feature type="binding site" evidence="1">
    <location>
        <position position="74"/>
    </location>
    <ligand>
        <name>S-adenosyl-L-methionine</name>
        <dbReference type="ChEBI" id="CHEBI:59789"/>
    </ligand>
</feature>
<feature type="binding site" evidence="1">
    <location>
        <position position="95"/>
    </location>
    <ligand>
        <name>S-adenosyl-L-methionine</name>
        <dbReference type="ChEBI" id="CHEBI:59789"/>
    </ligand>
</feature>
<feature type="binding site" evidence="1">
    <location>
        <begin position="123"/>
        <end position="124"/>
    </location>
    <ligand>
        <name>S-adenosyl-L-methionine</name>
        <dbReference type="ChEBI" id="CHEBI:59789"/>
    </ligand>
</feature>
<feature type="binding site" evidence="1">
    <location>
        <position position="140"/>
    </location>
    <ligand>
        <name>S-adenosyl-L-methionine</name>
        <dbReference type="ChEBI" id="CHEBI:59789"/>
    </ligand>
</feature>
<sequence length="251" mass="28136">MVEDSQETTHFGFQTVAKEQKADMVAHVFHSVASKYDVMNDLMSFGIHRLWKRFTIDCSGVRRGQTVLDLAGGTGDLTAKFSRMVGETGKVILADINDSMLKMGREKLRNIGVIGNVEYVQANAEALPFPDNTFDCITISFGLRNVTEKEKALRSMFRVLKPGGRLLVLEFSKPIIEPLSKAYDAYSFHILPRIGSMVANDADSYRYLAESIRMHPDQDTLKAMMQDAGFESVDYYNLTAGVVALHRGYKF</sequence>
<gene>
    <name evidence="1" type="primary">ubiE</name>
    <name type="ordered locus">SeAg_B4201</name>
</gene>
<name>UBIE_SALA4</name>
<keyword id="KW-0474">Menaquinone biosynthesis</keyword>
<keyword id="KW-0489">Methyltransferase</keyword>
<keyword id="KW-0949">S-adenosyl-L-methionine</keyword>
<keyword id="KW-0808">Transferase</keyword>
<keyword id="KW-0831">Ubiquinone biosynthesis</keyword>
<organism>
    <name type="scientific">Salmonella agona (strain SL483)</name>
    <dbReference type="NCBI Taxonomy" id="454166"/>
    <lineage>
        <taxon>Bacteria</taxon>
        <taxon>Pseudomonadati</taxon>
        <taxon>Pseudomonadota</taxon>
        <taxon>Gammaproteobacteria</taxon>
        <taxon>Enterobacterales</taxon>
        <taxon>Enterobacteriaceae</taxon>
        <taxon>Salmonella</taxon>
    </lineage>
</organism>
<comment type="function">
    <text evidence="1">Methyltransferase required for the conversion of demethylmenaquinol (DMKH2) to menaquinol (MKH2) and the conversion of 2-polyprenyl-6-methoxy-1,4-benzoquinol (DDMQH2) to 2-polyprenyl-3-methyl-6-methoxy-1,4-benzoquinol (DMQH2).</text>
</comment>
<comment type="catalytic activity">
    <reaction evidence="1">
        <text>a 2-demethylmenaquinol + S-adenosyl-L-methionine = a menaquinol + S-adenosyl-L-homocysteine + H(+)</text>
        <dbReference type="Rhea" id="RHEA:42640"/>
        <dbReference type="Rhea" id="RHEA-COMP:9539"/>
        <dbReference type="Rhea" id="RHEA-COMP:9563"/>
        <dbReference type="ChEBI" id="CHEBI:15378"/>
        <dbReference type="ChEBI" id="CHEBI:18151"/>
        <dbReference type="ChEBI" id="CHEBI:55437"/>
        <dbReference type="ChEBI" id="CHEBI:57856"/>
        <dbReference type="ChEBI" id="CHEBI:59789"/>
        <dbReference type="EC" id="2.1.1.163"/>
    </reaction>
</comment>
<comment type="catalytic activity">
    <reaction evidence="1">
        <text>a 2-methoxy-6-(all-trans-polyprenyl)benzene-1,4-diol + S-adenosyl-L-methionine = a 5-methoxy-2-methyl-3-(all-trans-polyprenyl)benzene-1,4-diol + S-adenosyl-L-homocysteine + H(+)</text>
        <dbReference type="Rhea" id="RHEA:28286"/>
        <dbReference type="Rhea" id="RHEA-COMP:10858"/>
        <dbReference type="Rhea" id="RHEA-COMP:10859"/>
        <dbReference type="ChEBI" id="CHEBI:15378"/>
        <dbReference type="ChEBI" id="CHEBI:57856"/>
        <dbReference type="ChEBI" id="CHEBI:59789"/>
        <dbReference type="ChEBI" id="CHEBI:84166"/>
        <dbReference type="ChEBI" id="CHEBI:84167"/>
        <dbReference type="EC" id="2.1.1.201"/>
    </reaction>
</comment>
<comment type="pathway">
    <text evidence="1">Quinol/quinone metabolism; menaquinone biosynthesis; menaquinol from 1,4-dihydroxy-2-naphthoate: step 2/2.</text>
</comment>
<comment type="pathway">
    <text evidence="1">Cofactor biosynthesis; ubiquinone biosynthesis.</text>
</comment>
<comment type="similarity">
    <text evidence="1">Belongs to the class I-like SAM-binding methyltransferase superfamily. MenG/UbiE family.</text>
</comment>